<proteinExistence type="inferred from homology"/>
<reference key="1">
    <citation type="submission" date="2003-06" db="EMBL/GenBank/DDBJ databases">
        <title>The complete genome sequence of Haemophilus ducreyi.</title>
        <authorList>
            <person name="Munson R.S. Jr."/>
            <person name="Ray W.C."/>
            <person name="Mahairas G."/>
            <person name="Sabo P."/>
            <person name="Mungur R."/>
            <person name="Johnson L."/>
            <person name="Nguyen D."/>
            <person name="Wang J."/>
            <person name="Forst C."/>
            <person name="Hood L."/>
        </authorList>
    </citation>
    <scope>NUCLEOTIDE SEQUENCE [LARGE SCALE GENOMIC DNA]</scope>
    <source>
        <strain>35000HP / ATCC 700724</strain>
    </source>
</reference>
<keyword id="KW-0067">ATP-binding</keyword>
<keyword id="KW-0436">Ligase</keyword>
<keyword id="KW-0547">Nucleotide-binding</keyword>
<keyword id="KW-1185">Reference proteome</keyword>
<accession>Q7VPM9</accession>
<sequence>MSDASLTKINWQPTASIQTLLKRSKIMAEIRQFFTDRGVLEVETPALSEYSVTDVHLSTFSTEFLSPFAKQAKTLHLITSPEYHMKRLLAAGSSSIFQLCRVFRNEESGKRHNPEFTMLEWYRPHFDMYRLINEVDDLLQQILDCEPIESYSYQFVFQTYVGLDPLSASRAQLVEKARKHGFACEEDENRDTLLQFLFSEIVEANIGQERPTTVYHFPSSQAALAQISSEDHRVAERFEIYYKGLELANGFHELNDAKEQIRRFERDNQLREQMNLPPQPLDMRFLAALKAGIPNCSGVALGVDRLIMLALNANHIQEVMAFGVERA</sequence>
<evidence type="ECO:0000255" key="1">
    <source>
        <dbReference type="HAMAP-Rule" id="MF_00174"/>
    </source>
</evidence>
<dbReference type="EC" id="6.3.2.-" evidence="1"/>
<dbReference type="EMBL" id="AE017143">
    <property type="protein sequence ID" value="AAP95045.1"/>
    <property type="molecule type" value="Genomic_DNA"/>
</dbReference>
<dbReference type="RefSeq" id="WP_010944099.1">
    <property type="nucleotide sequence ID" value="NC_002940.2"/>
</dbReference>
<dbReference type="SMR" id="Q7VPM9"/>
<dbReference type="STRING" id="233412.HD_0029"/>
<dbReference type="KEGG" id="hdu:HD_0029"/>
<dbReference type="eggNOG" id="COG2269">
    <property type="taxonomic scope" value="Bacteria"/>
</dbReference>
<dbReference type="HOGENOM" id="CLU_008255_1_1_6"/>
<dbReference type="OrthoDB" id="9802326at2"/>
<dbReference type="Proteomes" id="UP000001022">
    <property type="component" value="Chromosome"/>
</dbReference>
<dbReference type="GO" id="GO:0005829">
    <property type="term" value="C:cytosol"/>
    <property type="evidence" value="ECO:0007669"/>
    <property type="project" value="TreeGrafter"/>
</dbReference>
<dbReference type="GO" id="GO:0016880">
    <property type="term" value="F:acid-ammonia (or amide) ligase activity"/>
    <property type="evidence" value="ECO:0007669"/>
    <property type="project" value="UniProtKB-UniRule"/>
</dbReference>
<dbReference type="GO" id="GO:0005524">
    <property type="term" value="F:ATP binding"/>
    <property type="evidence" value="ECO:0007669"/>
    <property type="project" value="UniProtKB-UniRule"/>
</dbReference>
<dbReference type="GO" id="GO:0004824">
    <property type="term" value="F:lysine-tRNA ligase activity"/>
    <property type="evidence" value="ECO:0007669"/>
    <property type="project" value="InterPro"/>
</dbReference>
<dbReference type="GO" id="GO:0000049">
    <property type="term" value="F:tRNA binding"/>
    <property type="evidence" value="ECO:0007669"/>
    <property type="project" value="TreeGrafter"/>
</dbReference>
<dbReference type="GO" id="GO:0006430">
    <property type="term" value="P:lysyl-tRNA aminoacylation"/>
    <property type="evidence" value="ECO:0007669"/>
    <property type="project" value="InterPro"/>
</dbReference>
<dbReference type="FunFam" id="3.30.930.10:FF:000017">
    <property type="entry name" value="Elongation factor P--(R)-beta-lysine ligase"/>
    <property type="match status" value="1"/>
</dbReference>
<dbReference type="Gene3D" id="3.30.930.10">
    <property type="entry name" value="Bira Bifunctional Protein, Domain 2"/>
    <property type="match status" value="1"/>
</dbReference>
<dbReference type="HAMAP" id="MF_00174">
    <property type="entry name" value="EF_P_modif_A"/>
    <property type="match status" value="1"/>
</dbReference>
<dbReference type="InterPro" id="IPR004364">
    <property type="entry name" value="Aa-tRNA-synt_II"/>
</dbReference>
<dbReference type="InterPro" id="IPR006195">
    <property type="entry name" value="aa-tRNA-synth_II"/>
</dbReference>
<dbReference type="InterPro" id="IPR045864">
    <property type="entry name" value="aa-tRNA-synth_II/BPL/LPL"/>
</dbReference>
<dbReference type="InterPro" id="IPR004525">
    <property type="entry name" value="EpmA"/>
</dbReference>
<dbReference type="InterPro" id="IPR018149">
    <property type="entry name" value="Lys-tRNA-synth_II_C"/>
</dbReference>
<dbReference type="NCBIfam" id="TIGR00462">
    <property type="entry name" value="genX"/>
    <property type="match status" value="1"/>
</dbReference>
<dbReference type="NCBIfam" id="NF006828">
    <property type="entry name" value="PRK09350.1"/>
    <property type="match status" value="1"/>
</dbReference>
<dbReference type="PANTHER" id="PTHR42918:SF6">
    <property type="entry name" value="ELONGATION FACTOR P--(R)-BETA-LYSINE LIGASE"/>
    <property type="match status" value="1"/>
</dbReference>
<dbReference type="PANTHER" id="PTHR42918">
    <property type="entry name" value="LYSYL-TRNA SYNTHETASE"/>
    <property type="match status" value="1"/>
</dbReference>
<dbReference type="Pfam" id="PF00152">
    <property type="entry name" value="tRNA-synt_2"/>
    <property type="match status" value="1"/>
</dbReference>
<dbReference type="PRINTS" id="PR00982">
    <property type="entry name" value="TRNASYNTHLYS"/>
</dbReference>
<dbReference type="SUPFAM" id="SSF55681">
    <property type="entry name" value="Class II aaRS and biotin synthetases"/>
    <property type="match status" value="1"/>
</dbReference>
<dbReference type="PROSITE" id="PS50862">
    <property type="entry name" value="AA_TRNA_LIGASE_II"/>
    <property type="match status" value="1"/>
</dbReference>
<name>EPMA_HAEDU</name>
<protein>
    <recommendedName>
        <fullName evidence="1">Elongation factor P--(R)-beta-lysine ligase</fullName>
        <shortName evidence="1">EF-P--(R)-beta-lysine ligase</shortName>
        <ecNumber evidence="1">6.3.2.-</ecNumber>
    </recommendedName>
    <alternativeName>
        <fullName evidence="1">EF-P post-translational modification enzyme A</fullName>
    </alternativeName>
    <alternativeName>
        <fullName evidence="1">EF-P-lysine lysyltransferase</fullName>
    </alternativeName>
</protein>
<comment type="function">
    <text evidence="1">With EpmB is involved in the beta-lysylation step of the post-translational modification of translation elongation factor P (EF-P). Catalyzes the ATP-dependent activation of (R)-beta-lysine produced by EpmB, forming a lysyl-adenylate, from which the beta-lysyl moiety is then transferred to the epsilon-amino group of a conserved specific lysine residue in EF-P.</text>
</comment>
<comment type="catalytic activity">
    <reaction evidence="1">
        <text>D-beta-lysine + L-lysyl-[protein] + ATP = N(6)-((3R)-3,6-diaminohexanoyl)-L-lysyl-[protein] + AMP + diphosphate + H(+)</text>
        <dbReference type="Rhea" id="RHEA:83435"/>
        <dbReference type="Rhea" id="RHEA-COMP:9752"/>
        <dbReference type="Rhea" id="RHEA-COMP:20131"/>
        <dbReference type="ChEBI" id="CHEBI:15378"/>
        <dbReference type="ChEBI" id="CHEBI:29969"/>
        <dbReference type="ChEBI" id="CHEBI:30616"/>
        <dbReference type="ChEBI" id="CHEBI:33019"/>
        <dbReference type="ChEBI" id="CHEBI:84138"/>
        <dbReference type="ChEBI" id="CHEBI:156053"/>
        <dbReference type="ChEBI" id="CHEBI:456215"/>
    </reaction>
    <physiologicalReaction direction="left-to-right" evidence="1">
        <dbReference type="Rhea" id="RHEA:83436"/>
    </physiologicalReaction>
</comment>
<comment type="subunit">
    <text evidence="1">Homodimer.</text>
</comment>
<comment type="similarity">
    <text evidence="1">Belongs to the class-II aminoacyl-tRNA synthetase family. EpmA subfamily.</text>
</comment>
<feature type="chain" id="PRO_0000152722" description="Elongation factor P--(R)-beta-lysine ligase">
    <location>
        <begin position="1"/>
        <end position="327"/>
    </location>
</feature>
<feature type="binding site" evidence="1">
    <location>
        <begin position="80"/>
        <end position="82"/>
    </location>
    <ligand>
        <name>substrate</name>
    </ligand>
</feature>
<feature type="binding site" evidence="1">
    <location>
        <begin position="104"/>
        <end position="106"/>
    </location>
    <ligand>
        <name>ATP</name>
        <dbReference type="ChEBI" id="CHEBI:30616"/>
    </ligand>
</feature>
<feature type="binding site" evidence="1">
    <location>
        <position position="113"/>
    </location>
    <ligand>
        <name>ATP</name>
        <dbReference type="ChEBI" id="CHEBI:30616"/>
    </ligand>
</feature>
<feature type="binding site" evidence="1">
    <location>
        <position position="122"/>
    </location>
    <ligand>
        <name>substrate</name>
    </ligand>
</feature>
<feature type="binding site" evidence="1">
    <location>
        <begin position="246"/>
        <end position="247"/>
    </location>
    <ligand>
        <name>ATP</name>
        <dbReference type="ChEBI" id="CHEBI:30616"/>
    </ligand>
</feature>
<feature type="binding site" evidence="1">
    <location>
        <position position="253"/>
    </location>
    <ligand>
        <name>substrate</name>
    </ligand>
</feature>
<feature type="binding site" evidence="1">
    <location>
        <position position="302"/>
    </location>
    <ligand>
        <name>ATP</name>
        <dbReference type="ChEBI" id="CHEBI:30616"/>
    </ligand>
</feature>
<gene>
    <name evidence="1" type="primary">epmA</name>
    <name type="synonym">genX</name>
    <name type="synonym">yjeA</name>
    <name type="ordered locus">HD_0029</name>
</gene>
<organism>
    <name type="scientific">Haemophilus ducreyi (strain 35000HP / ATCC 700724)</name>
    <dbReference type="NCBI Taxonomy" id="233412"/>
    <lineage>
        <taxon>Bacteria</taxon>
        <taxon>Pseudomonadati</taxon>
        <taxon>Pseudomonadota</taxon>
        <taxon>Gammaproteobacteria</taxon>
        <taxon>Pasteurellales</taxon>
        <taxon>Pasteurellaceae</taxon>
        <taxon>Haemophilus</taxon>
    </lineage>
</organism>